<organism>
    <name type="scientific">Acetivibrio thermocellus (strain ATCC 27405 / DSM 1237 / JCM 9322 / NBRC 103400 / NCIMB 10682 / NRRL B-4536 / VPI 7372)</name>
    <name type="common">Clostridium thermocellum</name>
    <dbReference type="NCBI Taxonomy" id="203119"/>
    <lineage>
        <taxon>Bacteria</taxon>
        <taxon>Bacillati</taxon>
        <taxon>Bacillota</taxon>
        <taxon>Clostridia</taxon>
        <taxon>Eubacteriales</taxon>
        <taxon>Oscillospiraceae</taxon>
        <taxon>Acetivibrio</taxon>
    </lineage>
</organism>
<proteinExistence type="inferred from homology"/>
<keyword id="KW-0521">NADP</keyword>
<keyword id="KW-0560">Oxidoreductase</keyword>
<keyword id="KW-0627">Porphyrin biosynthesis</keyword>
<keyword id="KW-1185">Reference proteome</keyword>
<comment type="function">
    <text evidence="1">Catalyzes the NADPH-dependent reduction of glutamyl-tRNA(Glu) to glutamate 1-semialdehyde (GSA).</text>
</comment>
<comment type="catalytic activity">
    <reaction evidence="1">
        <text>(S)-4-amino-5-oxopentanoate + tRNA(Glu) + NADP(+) = L-glutamyl-tRNA(Glu) + NADPH + H(+)</text>
        <dbReference type="Rhea" id="RHEA:12344"/>
        <dbReference type="Rhea" id="RHEA-COMP:9663"/>
        <dbReference type="Rhea" id="RHEA-COMP:9680"/>
        <dbReference type="ChEBI" id="CHEBI:15378"/>
        <dbReference type="ChEBI" id="CHEBI:57501"/>
        <dbReference type="ChEBI" id="CHEBI:57783"/>
        <dbReference type="ChEBI" id="CHEBI:58349"/>
        <dbReference type="ChEBI" id="CHEBI:78442"/>
        <dbReference type="ChEBI" id="CHEBI:78520"/>
        <dbReference type="EC" id="1.2.1.70"/>
    </reaction>
</comment>
<comment type="pathway">
    <text evidence="1">Porphyrin-containing compound metabolism; protoporphyrin-IX biosynthesis; 5-aminolevulinate from L-glutamyl-tRNA(Glu): step 1/2.</text>
</comment>
<comment type="subunit">
    <text evidence="1">Homodimer.</text>
</comment>
<comment type="domain">
    <text evidence="1">Possesses an unusual extended V-shaped dimeric structure with each monomer consisting of three distinct domains arranged along a curved 'spinal' alpha-helix. The N-terminal catalytic domain specifically recognizes the glutamate moiety of the substrate. The second domain is the NADPH-binding domain, and the third C-terminal domain is responsible for dimerization.</text>
</comment>
<comment type="miscellaneous">
    <text evidence="1">During catalysis, the active site Cys acts as a nucleophile attacking the alpha-carbonyl group of tRNA-bound glutamate with the formation of a thioester intermediate between enzyme and glutamate, and the concomitant release of tRNA(Glu). The thioester intermediate is finally reduced by direct hydride transfer from NADPH, to form the product GSA.</text>
</comment>
<comment type="similarity">
    <text evidence="1">Belongs to the glutamyl-tRNA reductase family.</text>
</comment>
<evidence type="ECO:0000255" key="1">
    <source>
        <dbReference type="HAMAP-Rule" id="MF_00087"/>
    </source>
</evidence>
<gene>
    <name evidence="1" type="primary">hemA</name>
    <name type="ordered locus">Cthe_2525</name>
</gene>
<dbReference type="EC" id="1.2.1.70" evidence="1"/>
<dbReference type="EMBL" id="CP000568">
    <property type="protein sequence ID" value="ABN53727.1"/>
    <property type="molecule type" value="Genomic_DNA"/>
</dbReference>
<dbReference type="RefSeq" id="WP_003513114.1">
    <property type="nucleotide sequence ID" value="NC_009012.1"/>
</dbReference>
<dbReference type="SMR" id="A3DIE8"/>
<dbReference type="STRING" id="203119.Cthe_2525"/>
<dbReference type="DNASU" id="4809281"/>
<dbReference type="GeneID" id="35803352"/>
<dbReference type="KEGG" id="cth:Cthe_2525"/>
<dbReference type="eggNOG" id="COG0373">
    <property type="taxonomic scope" value="Bacteria"/>
</dbReference>
<dbReference type="HOGENOM" id="CLU_035113_1_1_9"/>
<dbReference type="OrthoDB" id="110209at2"/>
<dbReference type="UniPathway" id="UPA00251">
    <property type="reaction ID" value="UER00316"/>
</dbReference>
<dbReference type="Proteomes" id="UP000002145">
    <property type="component" value="Chromosome"/>
</dbReference>
<dbReference type="GO" id="GO:0008883">
    <property type="term" value="F:glutamyl-tRNA reductase activity"/>
    <property type="evidence" value="ECO:0007669"/>
    <property type="project" value="UniProtKB-UniRule"/>
</dbReference>
<dbReference type="GO" id="GO:0050661">
    <property type="term" value="F:NADP binding"/>
    <property type="evidence" value="ECO:0007669"/>
    <property type="project" value="InterPro"/>
</dbReference>
<dbReference type="GO" id="GO:0019353">
    <property type="term" value="P:protoporphyrinogen IX biosynthetic process from glutamate"/>
    <property type="evidence" value="ECO:0007669"/>
    <property type="project" value="TreeGrafter"/>
</dbReference>
<dbReference type="FunFam" id="3.30.460.30:FF:000001">
    <property type="entry name" value="Glutamyl-tRNA reductase"/>
    <property type="match status" value="1"/>
</dbReference>
<dbReference type="Gene3D" id="3.30.460.30">
    <property type="entry name" value="Glutamyl-tRNA reductase, N-terminal domain"/>
    <property type="match status" value="1"/>
</dbReference>
<dbReference type="Gene3D" id="3.40.50.720">
    <property type="entry name" value="NAD(P)-binding Rossmann-like Domain"/>
    <property type="match status" value="1"/>
</dbReference>
<dbReference type="HAMAP" id="MF_00087">
    <property type="entry name" value="Glu_tRNA_reductase"/>
    <property type="match status" value="1"/>
</dbReference>
<dbReference type="InterPro" id="IPR000343">
    <property type="entry name" value="4pyrrol_synth_GluRdtase"/>
</dbReference>
<dbReference type="InterPro" id="IPR015895">
    <property type="entry name" value="4pyrrol_synth_GluRdtase_N"/>
</dbReference>
<dbReference type="InterPro" id="IPR036343">
    <property type="entry name" value="GluRdtase_N_sf"/>
</dbReference>
<dbReference type="InterPro" id="IPR036291">
    <property type="entry name" value="NAD(P)-bd_dom_sf"/>
</dbReference>
<dbReference type="InterPro" id="IPR006151">
    <property type="entry name" value="Shikm_DH/Glu-tRNA_Rdtase"/>
</dbReference>
<dbReference type="NCBIfam" id="TIGR01035">
    <property type="entry name" value="hemA"/>
    <property type="match status" value="1"/>
</dbReference>
<dbReference type="PANTHER" id="PTHR43013">
    <property type="entry name" value="GLUTAMYL-TRNA REDUCTASE"/>
    <property type="match status" value="1"/>
</dbReference>
<dbReference type="PANTHER" id="PTHR43013:SF1">
    <property type="entry name" value="GLUTAMYL-TRNA REDUCTASE"/>
    <property type="match status" value="1"/>
</dbReference>
<dbReference type="Pfam" id="PF05201">
    <property type="entry name" value="GlutR_N"/>
    <property type="match status" value="1"/>
</dbReference>
<dbReference type="Pfam" id="PF01488">
    <property type="entry name" value="Shikimate_DH"/>
    <property type="match status" value="1"/>
</dbReference>
<dbReference type="SUPFAM" id="SSF69742">
    <property type="entry name" value="Glutamyl tRNA-reductase catalytic, N-terminal domain"/>
    <property type="match status" value="1"/>
</dbReference>
<dbReference type="SUPFAM" id="SSF51735">
    <property type="entry name" value="NAD(P)-binding Rossmann-fold domains"/>
    <property type="match status" value="1"/>
</dbReference>
<accession>A3DIE8</accession>
<sequence>MNVIMAGIDYTLAPIDIREKFSFTKSTLQAVYNDLLKNENIFGAVIVSTCNRTELYLSCEEGLYINPFELLCDAANFDYEEYSNMHVLRTGVDVIRHLCELACGVKSQIWGEDQIITQVRNAIELAREMNASDSTLEVMFRIAVTSAKKVKTTLKLSSTERSIAYSALKIIKSKENISKALVIGNGEIGRLMASILIENGYDTTITLRRYRHGDNIIPLGAKTIEYVARYEKLKDCDVVISATLSPHYTLEIDKIDRIKYPRLFIDLAVPRDIDPKIKSLDNVELYDLDSIYAGEVDKNRTEQMIQVKKIIDKYIFDYYRWYEYRKRLVLT</sequence>
<reference key="1">
    <citation type="submission" date="2007-02" db="EMBL/GenBank/DDBJ databases">
        <title>Complete sequence of Clostridium thermocellum ATCC 27405.</title>
        <authorList>
            <consortium name="US DOE Joint Genome Institute"/>
            <person name="Copeland A."/>
            <person name="Lucas S."/>
            <person name="Lapidus A."/>
            <person name="Barry K."/>
            <person name="Detter J.C."/>
            <person name="Glavina del Rio T."/>
            <person name="Hammon N."/>
            <person name="Israni S."/>
            <person name="Dalin E."/>
            <person name="Tice H."/>
            <person name="Pitluck S."/>
            <person name="Chertkov O."/>
            <person name="Brettin T."/>
            <person name="Bruce D."/>
            <person name="Han C."/>
            <person name="Tapia R."/>
            <person name="Gilna P."/>
            <person name="Schmutz J."/>
            <person name="Larimer F."/>
            <person name="Land M."/>
            <person name="Hauser L."/>
            <person name="Kyrpides N."/>
            <person name="Mikhailova N."/>
            <person name="Wu J.H.D."/>
            <person name="Newcomb M."/>
            <person name="Richardson P."/>
        </authorList>
    </citation>
    <scope>NUCLEOTIDE SEQUENCE [LARGE SCALE GENOMIC DNA]</scope>
    <source>
        <strain>ATCC 27405 / DSM 1237 / JCM 9322 / NBRC 103400 / NCIMB 10682 / NRRL B-4536 / VPI 7372</strain>
    </source>
</reference>
<feature type="chain" id="PRO_1000004614" description="Glutamyl-tRNA reductase">
    <location>
        <begin position="1"/>
        <end position="331"/>
    </location>
</feature>
<feature type="active site" description="Nucleophile" evidence="1">
    <location>
        <position position="50"/>
    </location>
</feature>
<feature type="binding site" evidence="1">
    <location>
        <begin position="49"/>
        <end position="52"/>
    </location>
    <ligand>
        <name>substrate</name>
    </ligand>
</feature>
<feature type="binding site" evidence="1">
    <location>
        <position position="107"/>
    </location>
    <ligand>
        <name>substrate</name>
    </ligand>
</feature>
<feature type="binding site" evidence="1">
    <location>
        <begin position="112"/>
        <end position="114"/>
    </location>
    <ligand>
        <name>substrate</name>
    </ligand>
</feature>
<feature type="binding site" evidence="1">
    <location>
        <position position="118"/>
    </location>
    <ligand>
        <name>substrate</name>
    </ligand>
</feature>
<feature type="binding site" evidence="1">
    <location>
        <begin position="184"/>
        <end position="189"/>
    </location>
    <ligand>
        <name>NADP(+)</name>
        <dbReference type="ChEBI" id="CHEBI:58349"/>
    </ligand>
</feature>
<feature type="site" description="Important for activity" evidence="1">
    <location>
        <position position="97"/>
    </location>
</feature>
<name>HEM1_ACET2</name>
<protein>
    <recommendedName>
        <fullName evidence="1">Glutamyl-tRNA reductase</fullName>
        <shortName evidence="1">GluTR</shortName>
        <ecNumber evidence="1">1.2.1.70</ecNumber>
    </recommendedName>
</protein>